<accession>A6Q604</accession>
<name>NAPA_NITSB</name>
<comment type="function">
    <text evidence="1">Catalytic subunit of the periplasmic nitrate reductase complex NapAB. Receives electrons from NapB and catalyzes the reduction of nitrate to nitrite.</text>
</comment>
<comment type="catalytic activity">
    <reaction evidence="1">
        <text>2 Fe(II)-[cytochrome] + nitrate + 2 H(+) = 2 Fe(III)-[cytochrome] + nitrite + H2O</text>
        <dbReference type="Rhea" id="RHEA:12909"/>
        <dbReference type="Rhea" id="RHEA-COMP:11777"/>
        <dbReference type="Rhea" id="RHEA-COMP:11778"/>
        <dbReference type="ChEBI" id="CHEBI:15377"/>
        <dbReference type="ChEBI" id="CHEBI:15378"/>
        <dbReference type="ChEBI" id="CHEBI:16301"/>
        <dbReference type="ChEBI" id="CHEBI:17632"/>
        <dbReference type="ChEBI" id="CHEBI:29033"/>
        <dbReference type="ChEBI" id="CHEBI:29034"/>
        <dbReference type="EC" id="1.9.6.1"/>
    </reaction>
</comment>
<comment type="cofactor">
    <cofactor evidence="1">
        <name>[4Fe-4S] cluster</name>
        <dbReference type="ChEBI" id="CHEBI:49883"/>
    </cofactor>
    <text evidence="1">Binds 1 [4Fe-4S] cluster.</text>
</comment>
<comment type="cofactor">
    <cofactor evidence="1">
        <name>Mo-bis(molybdopterin guanine dinucleotide)</name>
        <dbReference type="ChEBI" id="CHEBI:60539"/>
    </cofactor>
    <text evidence="1">Binds 1 molybdenum-bis(molybdopterin guanine dinucleotide) (Mo-bis-MGD) cofactor per subunit.</text>
</comment>
<comment type="subunit">
    <text evidence="1">Component of the periplasmic nitrate reductase NapAB complex composed of NapA and NapB.</text>
</comment>
<comment type="subcellular location">
    <subcellularLocation>
        <location evidence="1">Periplasm</location>
    </subcellularLocation>
</comment>
<comment type="PTM">
    <text evidence="1">Predicted to be exported by the Tat system. The position of the signal peptide cleavage has not been experimentally proven.</text>
</comment>
<comment type="similarity">
    <text evidence="1">Belongs to the prokaryotic molybdopterin-containing oxidoreductase family. NasA/NapA/NarB subfamily.</text>
</comment>
<organism>
    <name type="scientific">Nitratiruptor sp. (strain SB155-2)</name>
    <dbReference type="NCBI Taxonomy" id="387092"/>
    <lineage>
        <taxon>Bacteria</taxon>
        <taxon>Pseudomonadati</taxon>
        <taxon>Campylobacterota</taxon>
        <taxon>Epsilonproteobacteria</taxon>
        <taxon>Nautiliales</taxon>
        <taxon>Nitratiruptoraceae</taxon>
        <taxon>Nitratiruptor</taxon>
    </lineage>
</organism>
<proteinExistence type="inferred from homology"/>
<feature type="signal peptide" description="Tat-type signal" evidence="1">
    <location>
        <begin position="1"/>
        <end position="31"/>
    </location>
</feature>
<feature type="chain" id="PRO_1000069721" description="Periplasmic nitrate reductase" evidence="1">
    <location>
        <begin position="32"/>
        <end position="936"/>
    </location>
</feature>
<feature type="domain" description="4Fe-4S Mo/W bis-MGD-type" evidence="1">
    <location>
        <begin position="40"/>
        <end position="96"/>
    </location>
</feature>
<feature type="binding site" evidence="1">
    <location>
        <position position="47"/>
    </location>
    <ligand>
        <name>[4Fe-4S] cluster</name>
        <dbReference type="ChEBI" id="CHEBI:49883"/>
    </ligand>
</feature>
<feature type="binding site" evidence="1">
    <location>
        <position position="50"/>
    </location>
    <ligand>
        <name>[4Fe-4S] cluster</name>
        <dbReference type="ChEBI" id="CHEBI:49883"/>
    </ligand>
</feature>
<feature type="binding site" evidence="1">
    <location>
        <position position="54"/>
    </location>
    <ligand>
        <name>[4Fe-4S] cluster</name>
        <dbReference type="ChEBI" id="CHEBI:49883"/>
    </ligand>
</feature>
<feature type="binding site" evidence="1">
    <location>
        <position position="82"/>
    </location>
    <ligand>
        <name>[4Fe-4S] cluster</name>
        <dbReference type="ChEBI" id="CHEBI:49883"/>
    </ligand>
</feature>
<feature type="binding site" evidence="1">
    <location>
        <position position="84"/>
    </location>
    <ligand>
        <name>Mo-bis(molybdopterin guanine dinucleotide)</name>
        <dbReference type="ChEBI" id="CHEBI:60539"/>
    </ligand>
</feature>
<feature type="binding site" evidence="1">
    <location>
        <position position="152"/>
    </location>
    <ligand>
        <name>Mo-bis(molybdopterin guanine dinucleotide)</name>
        <dbReference type="ChEBI" id="CHEBI:60539"/>
    </ligand>
</feature>
<feature type="binding site" evidence="1">
    <location>
        <position position="177"/>
    </location>
    <ligand>
        <name>Mo-bis(molybdopterin guanine dinucleotide)</name>
        <dbReference type="ChEBI" id="CHEBI:60539"/>
    </ligand>
</feature>
<feature type="binding site" evidence="1">
    <location>
        <position position="181"/>
    </location>
    <ligand>
        <name>Mo-bis(molybdopterin guanine dinucleotide)</name>
        <dbReference type="ChEBI" id="CHEBI:60539"/>
    </ligand>
</feature>
<feature type="binding site" evidence="1">
    <location>
        <begin position="214"/>
        <end position="221"/>
    </location>
    <ligand>
        <name>Mo-bis(molybdopterin guanine dinucleotide)</name>
        <dbReference type="ChEBI" id="CHEBI:60539"/>
    </ligand>
</feature>
<feature type="binding site" evidence="1">
    <location>
        <begin position="246"/>
        <end position="250"/>
    </location>
    <ligand>
        <name>Mo-bis(molybdopterin guanine dinucleotide)</name>
        <dbReference type="ChEBI" id="CHEBI:60539"/>
    </ligand>
</feature>
<feature type="binding site" evidence="1">
    <location>
        <position position="424"/>
    </location>
    <ligand>
        <name>Mo-bis(molybdopterin guanine dinucleotide)</name>
        <dbReference type="ChEBI" id="CHEBI:60539"/>
    </ligand>
</feature>
<feature type="binding site" evidence="1">
    <location>
        <position position="428"/>
    </location>
    <ligand>
        <name>Mo-bis(molybdopterin guanine dinucleotide)</name>
        <dbReference type="ChEBI" id="CHEBI:60539"/>
    </ligand>
</feature>
<feature type="binding site" evidence="1">
    <location>
        <position position="534"/>
    </location>
    <ligand>
        <name>Mo-bis(molybdopterin guanine dinucleotide)</name>
        <dbReference type="ChEBI" id="CHEBI:60539"/>
    </ligand>
</feature>
<feature type="binding site" evidence="1">
    <location>
        <begin position="559"/>
        <end position="560"/>
    </location>
    <ligand>
        <name>Mo-bis(molybdopterin guanine dinucleotide)</name>
        <dbReference type="ChEBI" id="CHEBI:60539"/>
    </ligand>
</feature>
<feature type="binding site" evidence="1">
    <location>
        <position position="582"/>
    </location>
    <ligand>
        <name>Mo-bis(molybdopterin guanine dinucleotide)</name>
        <dbReference type="ChEBI" id="CHEBI:60539"/>
    </ligand>
</feature>
<feature type="binding site" evidence="1">
    <location>
        <position position="609"/>
    </location>
    <ligand>
        <name>Mo-bis(molybdopterin guanine dinucleotide)</name>
        <dbReference type="ChEBI" id="CHEBI:60539"/>
    </ligand>
</feature>
<feature type="binding site" evidence="1">
    <location>
        <begin position="826"/>
        <end position="835"/>
    </location>
    <ligand>
        <name>Mo-bis(molybdopterin guanine dinucleotide)</name>
        <dbReference type="ChEBI" id="CHEBI:60539"/>
    </ligand>
</feature>
<feature type="binding site" evidence="1">
    <location>
        <position position="902"/>
    </location>
    <ligand>
        <name>substrate</name>
    </ligand>
</feature>
<feature type="binding site" evidence="1">
    <location>
        <position position="910"/>
    </location>
    <ligand>
        <name>Mo-bis(molybdopterin guanine dinucleotide)</name>
        <dbReference type="ChEBI" id="CHEBI:60539"/>
    </ligand>
</feature>
<feature type="binding site" evidence="1">
    <location>
        <position position="927"/>
    </location>
    <ligand>
        <name>Mo-bis(molybdopterin guanine dinucleotide)</name>
        <dbReference type="ChEBI" id="CHEBI:60539"/>
    </ligand>
</feature>
<sequence>MALSRRDFLKSSAAAAAASAVGLSVPKEVEAASKEAQKGWRWDKAVCRFCGTGCGIMIATKDDRIVAVKGDPLAPVNRGLNCIKGYFTAKIMYGADRLKTPLLRMNDKGEFDKKGKFRPVSWKRAFDEMEKQFRKAYNELGPTGVAFFGSGQYTVMEGYAAAKLMKAGFRSNNIDPNARHCMASAVAGFIQTFGIDEPAGCYDDIELTDTIVLWGSNMAEMHPILWARCTDRKLSDPNKVKVVVLSTYTHRSCDLADDVIIFKPNTDLAIWNYIARSIVYDHPDAIDWNFVKEYCVFATGYPDIGYGMRNPKRAEELGYSKKEMQTVWHQDHKKLSEDEKRALAPFGYGNADVMKMKHVKAAGKHWAISFEEFKKSLEPYTLDYVAKVAKGDPDESLESFKAKLQRLKDLYVEKGRKVVSFWTMGMNQHTRGTWDNELSYVVHFLLGKQALPGSGAFSLTGQPSACGTAREVGTFAHRLPADMVVFNPKHRAIAEKIWKLPKGTINPKVGSHIVKIMRDLEDGKIKFAWVHVCNPWQDTANANHWIKAARDMDNFIVVSDGYPGISAKVADLILPSAMIYEKWGAYGNAERRTQHWRQQVTPVGDAMPDIWQYTEFAKRFKLKDVWKEWKLPDGTVLPNVLDEAKKMGYSEDDTLFDVLFANDYYRSFKWPDPIGEGFLNTEAEGDKRNVIGADGKPWKGYGFFIQKALWEEYRKFGEGRGHDYAPFDVYHKVRGLRWPVVNGKDTPWRFNVNYDPYAKREKELGHVKGEFAFYGHALKVIPQGSLTGPDKNKPKIHLPNKAKIFARPYMEPPEVPDNEYDTWLCTGRVLEHWHSGTMTMRVPELYRAVPEALCYMHPEDAKKRGVKRGDLVVIESRRGKCKARVETRGRNRPPRGLVFVPWFDERVYINLVTLDATCPISKQTDYKKCAVKIYKA</sequence>
<reference key="1">
    <citation type="journal article" date="2007" name="Proc. Natl. Acad. Sci. U.S.A.">
        <title>Deep-sea vent epsilon-proteobacterial genomes provide insights into emergence of pathogens.</title>
        <authorList>
            <person name="Nakagawa S."/>
            <person name="Takaki Y."/>
            <person name="Shimamura S."/>
            <person name="Reysenbach A.-L."/>
            <person name="Takai K."/>
            <person name="Horikoshi K."/>
        </authorList>
    </citation>
    <scope>NUCLEOTIDE SEQUENCE [LARGE SCALE GENOMIC DNA]</scope>
    <source>
        <strain>SB155-2</strain>
    </source>
</reference>
<evidence type="ECO:0000255" key="1">
    <source>
        <dbReference type="HAMAP-Rule" id="MF_01630"/>
    </source>
</evidence>
<keyword id="KW-0004">4Fe-4S</keyword>
<keyword id="KW-0249">Electron transport</keyword>
<keyword id="KW-0408">Iron</keyword>
<keyword id="KW-0411">Iron-sulfur</keyword>
<keyword id="KW-0479">Metal-binding</keyword>
<keyword id="KW-0500">Molybdenum</keyword>
<keyword id="KW-0534">Nitrate assimilation</keyword>
<keyword id="KW-0560">Oxidoreductase</keyword>
<keyword id="KW-0574">Periplasm</keyword>
<keyword id="KW-1185">Reference proteome</keyword>
<keyword id="KW-0732">Signal</keyword>
<keyword id="KW-0813">Transport</keyword>
<gene>
    <name evidence="1" type="primary">napA</name>
    <name type="ordered locus">NIS_1808</name>
</gene>
<protein>
    <recommendedName>
        <fullName evidence="1">Periplasmic nitrate reductase</fullName>
        <ecNumber evidence="1">1.9.6.1</ecNumber>
    </recommendedName>
</protein>
<dbReference type="EC" id="1.9.6.1" evidence="1"/>
<dbReference type="EMBL" id="AP009178">
    <property type="protein sequence ID" value="BAF70913.1"/>
    <property type="molecule type" value="Genomic_DNA"/>
</dbReference>
<dbReference type="RefSeq" id="WP_012083176.1">
    <property type="nucleotide sequence ID" value="NC_009662.1"/>
</dbReference>
<dbReference type="SMR" id="A6Q604"/>
<dbReference type="FunCoup" id="A6Q604">
    <property type="interactions" value="43"/>
</dbReference>
<dbReference type="STRING" id="387092.NIS_1808"/>
<dbReference type="KEGG" id="nis:NIS_1808"/>
<dbReference type="eggNOG" id="COG0243">
    <property type="taxonomic scope" value="Bacteria"/>
</dbReference>
<dbReference type="HOGENOM" id="CLU_000422_13_4_7"/>
<dbReference type="InParanoid" id="A6Q604"/>
<dbReference type="OrthoDB" id="7376058at2"/>
<dbReference type="Proteomes" id="UP000001118">
    <property type="component" value="Chromosome"/>
</dbReference>
<dbReference type="GO" id="GO:0016020">
    <property type="term" value="C:membrane"/>
    <property type="evidence" value="ECO:0007669"/>
    <property type="project" value="TreeGrafter"/>
</dbReference>
<dbReference type="GO" id="GO:0009325">
    <property type="term" value="C:nitrate reductase complex"/>
    <property type="evidence" value="ECO:0007669"/>
    <property type="project" value="TreeGrafter"/>
</dbReference>
<dbReference type="GO" id="GO:0042597">
    <property type="term" value="C:periplasmic space"/>
    <property type="evidence" value="ECO:0007669"/>
    <property type="project" value="UniProtKB-SubCell"/>
</dbReference>
<dbReference type="GO" id="GO:0051539">
    <property type="term" value="F:4 iron, 4 sulfur cluster binding"/>
    <property type="evidence" value="ECO:0007669"/>
    <property type="project" value="UniProtKB-KW"/>
</dbReference>
<dbReference type="GO" id="GO:0009055">
    <property type="term" value="F:electron transfer activity"/>
    <property type="evidence" value="ECO:0007669"/>
    <property type="project" value="UniProtKB-UniRule"/>
</dbReference>
<dbReference type="GO" id="GO:0005506">
    <property type="term" value="F:iron ion binding"/>
    <property type="evidence" value="ECO:0007669"/>
    <property type="project" value="UniProtKB-UniRule"/>
</dbReference>
<dbReference type="GO" id="GO:0030151">
    <property type="term" value="F:molybdenum ion binding"/>
    <property type="evidence" value="ECO:0007669"/>
    <property type="project" value="InterPro"/>
</dbReference>
<dbReference type="GO" id="GO:0043546">
    <property type="term" value="F:molybdopterin cofactor binding"/>
    <property type="evidence" value="ECO:0007669"/>
    <property type="project" value="InterPro"/>
</dbReference>
<dbReference type="GO" id="GO:0050140">
    <property type="term" value="F:nitrate reductase (cytochrome) activity"/>
    <property type="evidence" value="ECO:0007669"/>
    <property type="project" value="UniProtKB-EC"/>
</dbReference>
<dbReference type="GO" id="GO:0006777">
    <property type="term" value="P:Mo-molybdopterin cofactor biosynthetic process"/>
    <property type="evidence" value="ECO:0007669"/>
    <property type="project" value="UniProtKB-UniRule"/>
</dbReference>
<dbReference type="GO" id="GO:0042128">
    <property type="term" value="P:nitrate assimilation"/>
    <property type="evidence" value="ECO:0007669"/>
    <property type="project" value="UniProtKB-UniRule"/>
</dbReference>
<dbReference type="CDD" id="cd02791">
    <property type="entry name" value="MopB_CT_Nitrate-R-NapA-like"/>
    <property type="match status" value="1"/>
</dbReference>
<dbReference type="FunFam" id="2.40.40.20:FF:000005">
    <property type="entry name" value="Periplasmic nitrate reductase"/>
    <property type="match status" value="1"/>
</dbReference>
<dbReference type="Gene3D" id="2.40.40.20">
    <property type="match status" value="1"/>
</dbReference>
<dbReference type="Gene3D" id="3.30.200.210">
    <property type="match status" value="1"/>
</dbReference>
<dbReference type="Gene3D" id="3.40.50.740">
    <property type="match status" value="2"/>
</dbReference>
<dbReference type="Gene3D" id="2.20.25.90">
    <property type="entry name" value="ADC-like domains"/>
    <property type="match status" value="1"/>
</dbReference>
<dbReference type="Gene3D" id="3.40.228.10">
    <property type="entry name" value="Dimethylsulfoxide Reductase, domain 2"/>
    <property type="match status" value="2"/>
</dbReference>
<dbReference type="HAMAP" id="MF_01630">
    <property type="entry name" value="Nitrate_reduct_NapA"/>
    <property type="match status" value="1"/>
</dbReference>
<dbReference type="InterPro" id="IPR009010">
    <property type="entry name" value="Asp_de-COase-like_dom_sf"/>
</dbReference>
<dbReference type="InterPro" id="IPR041957">
    <property type="entry name" value="CT_Nitrate-R-NapA-like"/>
</dbReference>
<dbReference type="InterPro" id="IPR006657">
    <property type="entry name" value="MoPterin_dinucl-bd_dom"/>
</dbReference>
<dbReference type="InterPro" id="IPR006656">
    <property type="entry name" value="Mopterin_OxRdtase"/>
</dbReference>
<dbReference type="InterPro" id="IPR006963">
    <property type="entry name" value="Mopterin_OxRdtase_4Fe-4S_dom"/>
</dbReference>
<dbReference type="InterPro" id="IPR027467">
    <property type="entry name" value="MopterinOxRdtase_cofactor_BS"/>
</dbReference>
<dbReference type="InterPro" id="IPR010051">
    <property type="entry name" value="Periplasm_NO3_reductase_lsu"/>
</dbReference>
<dbReference type="InterPro" id="IPR050123">
    <property type="entry name" value="Prok_molybdopt-oxidoreductase"/>
</dbReference>
<dbReference type="InterPro" id="IPR006311">
    <property type="entry name" value="TAT_signal"/>
</dbReference>
<dbReference type="InterPro" id="IPR019546">
    <property type="entry name" value="TAT_signal_bac_arc"/>
</dbReference>
<dbReference type="NCBIfam" id="TIGR01706">
    <property type="entry name" value="NAPA"/>
    <property type="match status" value="1"/>
</dbReference>
<dbReference type="NCBIfam" id="NF010055">
    <property type="entry name" value="PRK13532.1"/>
    <property type="match status" value="1"/>
</dbReference>
<dbReference type="NCBIfam" id="TIGR01409">
    <property type="entry name" value="TAT_signal_seq"/>
    <property type="match status" value="1"/>
</dbReference>
<dbReference type="PANTHER" id="PTHR43105:SF11">
    <property type="entry name" value="PERIPLASMIC NITRATE REDUCTASE"/>
    <property type="match status" value="1"/>
</dbReference>
<dbReference type="PANTHER" id="PTHR43105">
    <property type="entry name" value="RESPIRATORY NITRATE REDUCTASE"/>
    <property type="match status" value="1"/>
</dbReference>
<dbReference type="Pfam" id="PF04879">
    <property type="entry name" value="Molybdop_Fe4S4"/>
    <property type="match status" value="1"/>
</dbReference>
<dbReference type="Pfam" id="PF00384">
    <property type="entry name" value="Molybdopterin"/>
    <property type="match status" value="1"/>
</dbReference>
<dbReference type="Pfam" id="PF01568">
    <property type="entry name" value="Molydop_binding"/>
    <property type="match status" value="1"/>
</dbReference>
<dbReference type="Pfam" id="PF10518">
    <property type="entry name" value="TAT_signal"/>
    <property type="match status" value="1"/>
</dbReference>
<dbReference type="SMART" id="SM00926">
    <property type="entry name" value="Molybdop_Fe4S4"/>
    <property type="match status" value="1"/>
</dbReference>
<dbReference type="SUPFAM" id="SSF50692">
    <property type="entry name" value="ADC-like"/>
    <property type="match status" value="1"/>
</dbReference>
<dbReference type="SUPFAM" id="SSF53706">
    <property type="entry name" value="Formate dehydrogenase/DMSO reductase, domains 1-3"/>
    <property type="match status" value="1"/>
</dbReference>
<dbReference type="PROSITE" id="PS51669">
    <property type="entry name" value="4FE4S_MOW_BIS_MGD"/>
    <property type="match status" value="1"/>
</dbReference>
<dbReference type="PROSITE" id="PS00551">
    <property type="entry name" value="MOLYBDOPTERIN_PROK_1"/>
    <property type="match status" value="1"/>
</dbReference>
<dbReference type="PROSITE" id="PS51318">
    <property type="entry name" value="TAT"/>
    <property type="match status" value="1"/>
</dbReference>